<keyword id="KW-0004">4Fe-4S</keyword>
<keyword id="KW-0408">Iron</keyword>
<keyword id="KW-0411">Iron-sulfur</keyword>
<keyword id="KW-0414">Isoprene biosynthesis</keyword>
<keyword id="KW-0479">Metal-binding</keyword>
<keyword id="KW-0560">Oxidoreductase</keyword>
<keyword id="KW-1185">Reference proteome</keyword>
<gene>
    <name evidence="1" type="primary">ispH</name>
    <name type="ordered locus">Plut_1736</name>
</gene>
<accession>Q3B241</accession>
<reference key="1">
    <citation type="submission" date="2005-08" db="EMBL/GenBank/DDBJ databases">
        <title>Complete sequence of Pelodictyon luteolum DSM 273.</title>
        <authorList>
            <consortium name="US DOE Joint Genome Institute"/>
            <person name="Copeland A."/>
            <person name="Lucas S."/>
            <person name="Lapidus A."/>
            <person name="Barry K."/>
            <person name="Detter J.C."/>
            <person name="Glavina T."/>
            <person name="Hammon N."/>
            <person name="Israni S."/>
            <person name="Pitluck S."/>
            <person name="Bryant D."/>
            <person name="Schmutz J."/>
            <person name="Larimer F."/>
            <person name="Land M."/>
            <person name="Kyrpides N."/>
            <person name="Ivanova N."/>
            <person name="Richardson P."/>
        </authorList>
    </citation>
    <scope>NUCLEOTIDE SEQUENCE [LARGE SCALE GENOMIC DNA]</scope>
    <source>
        <strain>DSM 273 / BCRC 81028 / 2530</strain>
    </source>
</reference>
<sequence>MKVNLDRNSSGFCIGVQGTIHVAEEKLRAEIGLYSLGDVVHNEVEVKRLESLGLVTIDDQAFRELRDAPVLIRAHGEPPSTYETARANNLEVTDTTCPVVAKLQRTARQLHLLGYQVIIYGKPVHPEVIGINGHAANSAVIIKHADLSDPAETAPLDLSRKTALISQTTMDVPGFYQLKENLETLFRNAGNPQEGPWTEVRDIDITLGLTGMQPTAPHVYKDTICRQVSSRNSKLHDFALSNDCIIFVAGKKSSNGQVLYNICRDANPRSYFIEDTGDLDEGWLKEANGSPVGSVGICGATSTPMWLLEKVARHIESLER</sequence>
<evidence type="ECO:0000255" key="1">
    <source>
        <dbReference type="HAMAP-Rule" id="MF_00191"/>
    </source>
</evidence>
<dbReference type="EC" id="1.17.7.4" evidence="1"/>
<dbReference type="EMBL" id="CP000096">
    <property type="protein sequence ID" value="ABB24590.1"/>
    <property type="molecule type" value="Genomic_DNA"/>
</dbReference>
<dbReference type="RefSeq" id="WP_011358462.1">
    <property type="nucleotide sequence ID" value="NC_007512.1"/>
</dbReference>
<dbReference type="SMR" id="Q3B241"/>
<dbReference type="STRING" id="319225.Plut_1736"/>
<dbReference type="KEGG" id="plt:Plut_1736"/>
<dbReference type="eggNOG" id="COG0761">
    <property type="taxonomic scope" value="Bacteria"/>
</dbReference>
<dbReference type="HOGENOM" id="CLU_027486_0_1_10"/>
<dbReference type="OrthoDB" id="9777362at2"/>
<dbReference type="UniPathway" id="UPA00056">
    <property type="reaction ID" value="UER00097"/>
</dbReference>
<dbReference type="UniPathway" id="UPA00059">
    <property type="reaction ID" value="UER00105"/>
</dbReference>
<dbReference type="Proteomes" id="UP000002709">
    <property type="component" value="Chromosome"/>
</dbReference>
<dbReference type="GO" id="GO:0051539">
    <property type="term" value="F:4 iron, 4 sulfur cluster binding"/>
    <property type="evidence" value="ECO:0007669"/>
    <property type="project" value="UniProtKB-UniRule"/>
</dbReference>
<dbReference type="GO" id="GO:0051745">
    <property type="term" value="F:4-hydroxy-3-methylbut-2-enyl diphosphate reductase activity"/>
    <property type="evidence" value="ECO:0007669"/>
    <property type="project" value="UniProtKB-UniRule"/>
</dbReference>
<dbReference type="GO" id="GO:0046872">
    <property type="term" value="F:metal ion binding"/>
    <property type="evidence" value="ECO:0007669"/>
    <property type="project" value="UniProtKB-KW"/>
</dbReference>
<dbReference type="GO" id="GO:0050992">
    <property type="term" value="P:dimethylallyl diphosphate biosynthetic process"/>
    <property type="evidence" value="ECO:0007669"/>
    <property type="project" value="UniProtKB-UniRule"/>
</dbReference>
<dbReference type="GO" id="GO:0019288">
    <property type="term" value="P:isopentenyl diphosphate biosynthetic process, methylerythritol 4-phosphate pathway"/>
    <property type="evidence" value="ECO:0007669"/>
    <property type="project" value="UniProtKB-UniRule"/>
</dbReference>
<dbReference type="GO" id="GO:0016114">
    <property type="term" value="P:terpenoid biosynthetic process"/>
    <property type="evidence" value="ECO:0007669"/>
    <property type="project" value="UniProtKB-UniRule"/>
</dbReference>
<dbReference type="CDD" id="cd13944">
    <property type="entry name" value="lytB_ispH"/>
    <property type="match status" value="1"/>
</dbReference>
<dbReference type="Gene3D" id="3.40.50.11270">
    <property type="match status" value="1"/>
</dbReference>
<dbReference type="Gene3D" id="3.40.1010.20">
    <property type="entry name" value="4-hydroxy-3-methylbut-2-enyl diphosphate reductase, catalytic domain"/>
    <property type="match status" value="2"/>
</dbReference>
<dbReference type="HAMAP" id="MF_00191">
    <property type="entry name" value="IspH"/>
    <property type="match status" value="1"/>
</dbReference>
<dbReference type="InterPro" id="IPR003451">
    <property type="entry name" value="LytB/IspH"/>
</dbReference>
<dbReference type="NCBIfam" id="TIGR00216">
    <property type="entry name" value="ispH_lytB"/>
    <property type="match status" value="1"/>
</dbReference>
<dbReference type="NCBIfam" id="NF002187">
    <property type="entry name" value="PRK01045.1-1"/>
    <property type="match status" value="1"/>
</dbReference>
<dbReference type="PANTHER" id="PTHR30426">
    <property type="entry name" value="4-HYDROXY-3-METHYLBUT-2-ENYL DIPHOSPHATE REDUCTASE"/>
    <property type="match status" value="1"/>
</dbReference>
<dbReference type="PANTHER" id="PTHR30426:SF0">
    <property type="entry name" value="4-HYDROXY-3-METHYLBUT-2-ENYL DIPHOSPHATE REDUCTASE"/>
    <property type="match status" value="1"/>
</dbReference>
<dbReference type="Pfam" id="PF02401">
    <property type="entry name" value="LYTB"/>
    <property type="match status" value="1"/>
</dbReference>
<comment type="function">
    <text evidence="1">Catalyzes the conversion of 1-hydroxy-2-methyl-2-(E)-butenyl 4-diphosphate (HMBPP) into a mixture of isopentenyl diphosphate (IPP) and dimethylallyl diphosphate (DMAPP). Acts in the terminal step of the DOXP/MEP pathway for isoprenoid precursor biosynthesis.</text>
</comment>
<comment type="catalytic activity">
    <reaction evidence="1">
        <text>isopentenyl diphosphate + 2 oxidized [2Fe-2S]-[ferredoxin] + H2O = (2E)-4-hydroxy-3-methylbut-2-enyl diphosphate + 2 reduced [2Fe-2S]-[ferredoxin] + 2 H(+)</text>
        <dbReference type="Rhea" id="RHEA:24488"/>
        <dbReference type="Rhea" id="RHEA-COMP:10000"/>
        <dbReference type="Rhea" id="RHEA-COMP:10001"/>
        <dbReference type="ChEBI" id="CHEBI:15377"/>
        <dbReference type="ChEBI" id="CHEBI:15378"/>
        <dbReference type="ChEBI" id="CHEBI:33737"/>
        <dbReference type="ChEBI" id="CHEBI:33738"/>
        <dbReference type="ChEBI" id="CHEBI:128753"/>
        <dbReference type="ChEBI" id="CHEBI:128769"/>
        <dbReference type="EC" id="1.17.7.4"/>
    </reaction>
</comment>
<comment type="catalytic activity">
    <reaction evidence="1">
        <text>dimethylallyl diphosphate + 2 oxidized [2Fe-2S]-[ferredoxin] + H2O = (2E)-4-hydroxy-3-methylbut-2-enyl diphosphate + 2 reduced [2Fe-2S]-[ferredoxin] + 2 H(+)</text>
        <dbReference type="Rhea" id="RHEA:24825"/>
        <dbReference type="Rhea" id="RHEA-COMP:10000"/>
        <dbReference type="Rhea" id="RHEA-COMP:10001"/>
        <dbReference type="ChEBI" id="CHEBI:15377"/>
        <dbReference type="ChEBI" id="CHEBI:15378"/>
        <dbReference type="ChEBI" id="CHEBI:33737"/>
        <dbReference type="ChEBI" id="CHEBI:33738"/>
        <dbReference type="ChEBI" id="CHEBI:57623"/>
        <dbReference type="ChEBI" id="CHEBI:128753"/>
        <dbReference type="EC" id="1.17.7.4"/>
    </reaction>
</comment>
<comment type="cofactor">
    <cofactor evidence="1">
        <name>[4Fe-4S] cluster</name>
        <dbReference type="ChEBI" id="CHEBI:49883"/>
    </cofactor>
    <text evidence="1">Binds 1 [4Fe-4S] cluster per subunit.</text>
</comment>
<comment type="pathway">
    <text evidence="1">Isoprenoid biosynthesis; dimethylallyl diphosphate biosynthesis; dimethylallyl diphosphate from (2E)-4-hydroxy-3-methylbutenyl diphosphate: step 1/1.</text>
</comment>
<comment type="pathway">
    <text evidence="1">Isoprenoid biosynthesis; isopentenyl diphosphate biosynthesis via DXP pathway; isopentenyl diphosphate from 1-deoxy-D-xylulose 5-phosphate: step 6/6.</text>
</comment>
<comment type="similarity">
    <text evidence="1">Belongs to the IspH family.</text>
</comment>
<organism>
    <name type="scientific">Chlorobium luteolum (strain DSM 273 / BCRC 81028 / 2530)</name>
    <name type="common">Pelodictyon luteolum</name>
    <dbReference type="NCBI Taxonomy" id="319225"/>
    <lineage>
        <taxon>Bacteria</taxon>
        <taxon>Pseudomonadati</taxon>
        <taxon>Chlorobiota</taxon>
        <taxon>Chlorobiia</taxon>
        <taxon>Chlorobiales</taxon>
        <taxon>Chlorobiaceae</taxon>
        <taxon>Chlorobium/Pelodictyon group</taxon>
        <taxon>Pelodictyon</taxon>
    </lineage>
</organism>
<name>ISPH_CHLL3</name>
<protein>
    <recommendedName>
        <fullName evidence="1">4-hydroxy-3-methylbut-2-enyl diphosphate reductase</fullName>
        <shortName evidence="1">HMBPP reductase</shortName>
        <ecNumber evidence="1">1.17.7.4</ecNumber>
    </recommendedName>
</protein>
<feature type="chain" id="PRO_1000021147" description="4-hydroxy-3-methylbut-2-enyl diphosphate reductase">
    <location>
        <begin position="1"/>
        <end position="320"/>
    </location>
</feature>
<feature type="active site" description="Proton donor" evidence="1">
    <location>
        <position position="127"/>
    </location>
</feature>
<feature type="binding site" evidence="1">
    <location>
        <position position="13"/>
    </location>
    <ligand>
        <name>[4Fe-4S] cluster</name>
        <dbReference type="ChEBI" id="CHEBI:49883"/>
    </ligand>
</feature>
<feature type="binding site" evidence="1">
    <location>
        <position position="41"/>
    </location>
    <ligand>
        <name>(2E)-4-hydroxy-3-methylbut-2-enyl diphosphate</name>
        <dbReference type="ChEBI" id="CHEBI:128753"/>
    </ligand>
</feature>
<feature type="binding site" evidence="1">
    <location>
        <position position="41"/>
    </location>
    <ligand>
        <name>dimethylallyl diphosphate</name>
        <dbReference type="ChEBI" id="CHEBI:57623"/>
    </ligand>
</feature>
<feature type="binding site" evidence="1">
    <location>
        <position position="41"/>
    </location>
    <ligand>
        <name>isopentenyl diphosphate</name>
        <dbReference type="ChEBI" id="CHEBI:128769"/>
    </ligand>
</feature>
<feature type="binding site" evidence="1">
    <location>
        <position position="75"/>
    </location>
    <ligand>
        <name>(2E)-4-hydroxy-3-methylbut-2-enyl diphosphate</name>
        <dbReference type="ChEBI" id="CHEBI:128753"/>
    </ligand>
</feature>
<feature type="binding site" evidence="1">
    <location>
        <position position="75"/>
    </location>
    <ligand>
        <name>dimethylallyl diphosphate</name>
        <dbReference type="ChEBI" id="CHEBI:57623"/>
    </ligand>
</feature>
<feature type="binding site" evidence="1">
    <location>
        <position position="75"/>
    </location>
    <ligand>
        <name>isopentenyl diphosphate</name>
        <dbReference type="ChEBI" id="CHEBI:128769"/>
    </ligand>
</feature>
<feature type="binding site" evidence="1">
    <location>
        <position position="97"/>
    </location>
    <ligand>
        <name>[4Fe-4S] cluster</name>
        <dbReference type="ChEBI" id="CHEBI:49883"/>
    </ligand>
</feature>
<feature type="binding site" evidence="1">
    <location>
        <position position="125"/>
    </location>
    <ligand>
        <name>(2E)-4-hydroxy-3-methylbut-2-enyl diphosphate</name>
        <dbReference type="ChEBI" id="CHEBI:128753"/>
    </ligand>
</feature>
<feature type="binding site" evidence="1">
    <location>
        <position position="125"/>
    </location>
    <ligand>
        <name>dimethylallyl diphosphate</name>
        <dbReference type="ChEBI" id="CHEBI:57623"/>
    </ligand>
</feature>
<feature type="binding site" evidence="1">
    <location>
        <position position="125"/>
    </location>
    <ligand>
        <name>isopentenyl diphosphate</name>
        <dbReference type="ChEBI" id="CHEBI:128769"/>
    </ligand>
</feature>
<feature type="binding site" evidence="1">
    <location>
        <position position="168"/>
    </location>
    <ligand>
        <name>(2E)-4-hydroxy-3-methylbut-2-enyl diphosphate</name>
        <dbReference type="ChEBI" id="CHEBI:128753"/>
    </ligand>
</feature>
<feature type="binding site" evidence="1">
    <location>
        <position position="225"/>
    </location>
    <ligand>
        <name>[4Fe-4S] cluster</name>
        <dbReference type="ChEBI" id="CHEBI:49883"/>
    </ligand>
</feature>
<feature type="binding site" evidence="1">
    <location>
        <position position="253"/>
    </location>
    <ligand>
        <name>(2E)-4-hydroxy-3-methylbut-2-enyl diphosphate</name>
        <dbReference type="ChEBI" id="CHEBI:128753"/>
    </ligand>
</feature>
<feature type="binding site" evidence="1">
    <location>
        <position position="253"/>
    </location>
    <ligand>
        <name>dimethylallyl diphosphate</name>
        <dbReference type="ChEBI" id="CHEBI:57623"/>
    </ligand>
</feature>
<feature type="binding site" evidence="1">
    <location>
        <position position="253"/>
    </location>
    <ligand>
        <name>isopentenyl diphosphate</name>
        <dbReference type="ChEBI" id="CHEBI:128769"/>
    </ligand>
</feature>
<feature type="binding site" evidence="1">
    <location>
        <position position="254"/>
    </location>
    <ligand>
        <name>(2E)-4-hydroxy-3-methylbut-2-enyl diphosphate</name>
        <dbReference type="ChEBI" id="CHEBI:128753"/>
    </ligand>
</feature>
<feature type="binding site" evidence="1">
    <location>
        <position position="254"/>
    </location>
    <ligand>
        <name>dimethylallyl diphosphate</name>
        <dbReference type="ChEBI" id="CHEBI:57623"/>
    </ligand>
</feature>
<feature type="binding site" evidence="1">
    <location>
        <position position="254"/>
    </location>
    <ligand>
        <name>isopentenyl diphosphate</name>
        <dbReference type="ChEBI" id="CHEBI:128769"/>
    </ligand>
</feature>
<feature type="binding site" evidence="1">
    <location>
        <position position="255"/>
    </location>
    <ligand>
        <name>(2E)-4-hydroxy-3-methylbut-2-enyl diphosphate</name>
        <dbReference type="ChEBI" id="CHEBI:128753"/>
    </ligand>
</feature>
<feature type="binding site" evidence="1">
    <location>
        <position position="255"/>
    </location>
    <ligand>
        <name>dimethylallyl diphosphate</name>
        <dbReference type="ChEBI" id="CHEBI:57623"/>
    </ligand>
</feature>
<feature type="binding site" evidence="1">
    <location>
        <position position="255"/>
    </location>
    <ligand>
        <name>isopentenyl diphosphate</name>
        <dbReference type="ChEBI" id="CHEBI:128769"/>
    </ligand>
</feature>
<feature type="binding site" evidence="1">
    <location>
        <position position="302"/>
    </location>
    <ligand>
        <name>(2E)-4-hydroxy-3-methylbut-2-enyl diphosphate</name>
        <dbReference type="ChEBI" id="CHEBI:128753"/>
    </ligand>
</feature>
<feature type="binding site" evidence="1">
    <location>
        <position position="302"/>
    </location>
    <ligand>
        <name>dimethylallyl diphosphate</name>
        <dbReference type="ChEBI" id="CHEBI:57623"/>
    </ligand>
</feature>
<feature type="binding site" evidence="1">
    <location>
        <position position="302"/>
    </location>
    <ligand>
        <name>isopentenyl diphosphate</name>
        <dbReference type="ChEBI" id="CHEBI:128769"/>
    </ligand>
</feature>
<proteinExistence type="inferred from homology"/>